<feature type="chain" id="PRO_0000085219" description="Heparan sulfate glucosamine 3-O-sulfotransferase 3B1">
    <location>
        <begin position="1"/>
        <end position="390"/>
    </location>
</feature>
<feature type="topological domain" description="Cytoplasmic" evidence="2">
    <location>
        <begin position="1"/>
        <end position="32"/>
    </location>
</feature>
<feature type="transmembrane region" description="Helical; Signal-anchor for type II membrane protein" evidence="2">
    <location>
        <begin position="33"/>
        <end position="53"/>
    </location>
</feature>
<feature type="topological domain" description="Lumenal" evidence="2">
    <location>
        <begin position="54"/>
        <end position="390"/>
    </location>
</feature>
<feature type="region of interest" description="Disordered" evidence="3">
    <location>
        <begin position="1"/>
        <end position="25"/>
    </location>
</feature>
<feature type="region of interest" description="Disordered" evidence="3">
    <location>
        <begin position="74"/>
        <end position="133"/>
    </location>
</feature>
<feature type="compositionally biased region" description="Pro residues" evidence="3">
    <location>
        <begin position="83"/>
        <end position="96"/>
    </location>
</feature>
<feature type="compositionally biased region" description="Low complexity" evidence="3">
    <location>
        <begin position="123"/>
        <end position="133"/>
    </location>
</feature>
<feature type="binding site" evidence="1">
    <location>
        <begin position="147"/>
        <end position="151"/>
    </location>
    <ligand>
        <name>3'-phosphoadenylyl sulfate</name>
        <dbReference type="ChEBI" id="CHEBI:58339"/>
    </ligand>
</feature>
<feature type="binding site" evidence="1">
    <location>
        <begin position="169"/>
        <end position="175"/>
    </location>
    <ligand>
        <name>substrate</name>
    </ligand>
</feature>
<feature type="binding site" evidence="1">
    <location>
        <begin position="200"/>
        <end position="203"/>
    </location>
    <ligand>
        <name>substrate</name>
    </ligand>
</feature>
<feature type="binding site" evidence="1">
    <location>
        <position position="228"/>
    </location>
    <ligand>
        <name>3'-phosphoadenylyl sulfate</name>
        <dbReference type="ChEBI" id="CHEBI:58339"/>
    </ligand>
</feature>
<feature type="binding site" evidence="1">
    <location>
        <position position="236"/>
    </location>
    <ligand>
        <name>3'-phosphoadenylyl sulfate</name>
        <dbReference type="ChEBI" id="CHEBI:58339"/>
    </ligand>
</feature>
<feature type="binding site" evidence="1">
    <location>
        <begin position="268"/>
        <end position="269"/>
    </location>
    <ligand>
        <name>substrate</name>
    </ligand>
</feature>
<feature type="binding site" evidence="1">
    <location>
        <begin position="353"/>
        <end position="357"/>
    </location>
    <ligand>
        <name>3'-phosphoadenylyl sulfate</name>
        <dbReference type="ChEBI" id="CHEBI:58339"/>
    </ligand>
</feature>
<feature type="glycosylation site" description="N-linked (GlcNAc...) asparagine" evidence="2">
    <location>
        <position position="258"/>
    </location>
</feature>
<feature type="glycosylation site" description="N-linked (GlcNAc...) asparagine" evidence="2">
    <location>
        <position position="329"/>
    </location>
</feature>
<feature type="disulfide bond" evidence="1">
    <location>
        <begin position="336"/>
        <end position="348"/>
    </location>
</feature>
<proteinExistence type="evidence at protein level"/>
<gene>
    <name type="primary">HS3ST3B1</name>
    <name type="synonym">3OST3B1</name>
    <name type="synonym">HS3ST3B</name>
</gene>
<evidence type="ECO:0000250" key="1">
    <source>
        <dbReference type="UniProtKB" id="Q9Y663"/>
    </source>
</evidence>
<evidence type="ECO:0000255" key="2"/>
<evidence type="ECO:0000256" key="3">
    <source>
        <dbReference type="SAM" id="MobiDB-lite"/>
    </source>
</evidence>
<evidence type="ECO:0000269" key="4">
    <source>
    </source>
</evidence>
<evidence type="ECO:0000269" key="5">
    <source>
    </source>
</evidence>
<evidence type="ECO:0000269" key="6">
    <source>
    </source>
</evidence>
<evidence type="ECO:0000303" key="7">
    <source>
    </source>
</evidence>
<evidence type="ECO:0000305" key="8"/>
<name>HS3SB_HUMAN</name>
<sequence>MGQRLSGGRSCLDVPGRLLPQPPPPPPPVRRKLALLFAMLCVWLYMFLYSCAGSCAAAPGLLLLGSGSRAAHDPPALATAPDGTPPRLPFRAPPATPLASGKEMAEGAASPEEQSPEVPDSPSPISSFFSGSGSKQLPQAIIIGVKKGGTRALLEFLRVHPDVRAVGAEPHFFDRSYDKGLAWYRDLMPRTLDGQITMEKTPSYFVTREAPARISAMSKDTKLIVVVRDPVTRAISDYTQTLSKRPDIPTFESLTFKNRTAGLIDTSWSAIQIGIYAKHLEHWLRHFPIRQMLFVSGERLISDPAGELGRVQDFLGLKRIITDKHFYFNKTKGFPCLKKAEGSSRPHCLGKTKGRTHPEIDREVVRRLREFYRPFNLKFYQMTGHDFGWD</sequence>
<keyword id="KW-1015">Disulfide bond</keyword>
<keyword id="KW-0325">Glycoprotein</keyword>
<keyword id="KW-0333">Golgi apparatus</keyword>
<keyword id="KW-0472">Membrane</keyword>
<keyword id="KW-1267">Proteomics identification</keyword>
<keyword id="KW-1185">Reference proteome</keyword>
<keyword id="KW-0735">Signal-anchor</keyword>
<keyword id="KW-0808">Transferase</keyword>
<keyword id="KW-0812">Transmembrane</keyword>
<keyword id="KW-1133">Transmembrane helix</keyword>
<accession>Q9Y662</accession>
<accession>B3KN58</accession>
<accession>D3DTS6</accession>
<reference key="1">
    <citation type="journal article" date="1999" name="J. Biol. Chem.">
        <title>Multiple isoforms of heparan sulfate D-glucosaminyl 3-O-sulfotransferase. Isolation, characterization, and expression of human cDNAs and identification of distinct genomic loci.</title>
        <authorList>
            <person name="Shworak N.W."/>
            <person name="Liu J."/>
            <person name="Petros L.M."/>
            <person name="Zhang L."/>
            <person name="Kobayashi M."/>
            <person name="Copeland N.G."/>
            <person name="Jenkins N.A."/>
            <person name="Rosenberg R.D."/>
        </authorList>
    </citation>
    <scope>NUCLEOTIDE SEQUENCE [MRNA]</scope>
    <scope>TISSUE SPECIFICITY</scope>
    <source>
        <tissue>Liver</tissue>
    </source>
</reference>
<reference key="2">
    <citation type="journal article" date="2004" name="Nat. Genet.">
        <title>Complete sequencing and characterization of 21,243 full-length human cDNAs.</title>
        <authorList>
            <person name="Ota T."/>
            <person name="Suzuki Y."/>
            <person name="Nishikawa T."/>
            <person name="Otsuki T."/>
            <person name="Sugiyama T."/>
            <person name="Irie R."/>
            <person name="Wakamatsu A."/>
            <person name="Hayashi K."/>
            <person name="Sato H."/>
            <person name="Nagai K."/>
            <person name="Kimura K."/>
            <person name="Makita H."/>
            <person name="Sekine M."/>
            <person name="Obayashi M."/>
            <person name="Nishi T."/>
            <person name="Shibahara T."/>
            <person name="Tanaka T."/>
            <person name="Ishii S."/>
            <person name="Yamamoto J."/>
            <person name="Saito K."/>
            <person name="Kawai Y."/>
            <person name="Isono Y."/>
            <person name="Nakamura Y."/>
            <person name="Nagahari K."/>
            <person name="Murakami K."/>
            <person name="Yasuda T."/>
            <person name="Iwayanagi T."/>
            <person name="Wagatsuma M."/>
            <person name="Shiratori A."/>
            <person name="Sudo H."/>
            <person name="Hosoiri T."/>
            <person name="Kaku Y."/>
            <person name="Kodaira H."/>
            <person name="Kondo H."/>
            <person name="Sugawara M."/>
            <person name="Takahashi M."/>
            <person name="Kanda K."/>
            <person name="Yokoi T."/>
            <person name="Furuya T."/>
            <person name="Kikkawa E."/>
            <person name="Omura Y."/>
            <person name="Abe K."/>
            <person name="Kamihara K."/>
            <person name="Katsuta N."/>
            <person name="Sato K."/>
            <person name="Tanikawa M."/>
            <person name="Yamazaki M."/>
            <person name="Ninomiya K."/>
            <person name="Ishibashi T."/>
            <person name="Yamashita H."/>
            <person name="Murakawa K."/>
            <person name="Fujimori K."/>
            <person name="Tanai H."/>
            <person name="Kimata M."/>
            <person name="Watanabe M."/>
            <person name="Hiraoka S."/>
            <person name="Chiba Y."/>
            <person name="Ishida S."/>
            <person name="Ono Y."/>
            <person name="Takiguchi S."/>
            <person name="Watanabe S."/>
            <person name="Yosida M."/>
            <person name="Hotuta T."/>
            <person name="Kusano J."/>
            <person name="Kanehori K."/>
            <person name="Takahashi-Fujii A."/>
            <person name="Hara H."/>
            <person name="Tanase T.-O."/>
            <person name="Nomura Y."/>
            <person name="Togiya S."/>
            <person name="Komai F."/>
            <person name="Hara R."/>
            <person name="Takeuchi K."/>
            <person name="Arita M."/>
            <person name="Imose N."/>
            <person name="Musashino K."/>
            <person name="Yuuki H."/>
            <person name="Oshima A."/>
            <person name="Sasaki N."/>
            <person name="Aotsuka S."/>
            <person name="Yoshikawa Y."/>
            <person name="Matsunawa H."/>
            <person name="Ichihara T."/>
            <person name="Shiohata N."/>
            <person name="Sano S."/>
            <person name="Moriya S."/>
            <person name="Momiyama H."/>
            <person name="Satoh N."/>
            <person name="Takami S."/>
            <person name="Terashima Y."/>
            <person name="Suzuki O."/>
            <person name="Nakagawa S."/>
            <person name="Senoh A."/>
            <person name="Mizoguchi H."/>
            <person name="Goto Y."/>
            <person name="Shimizu F."/>
            <person name="Wakebe H."/>
            <person name="Hishigaki H."/>
            <person name="Watanabe T."/>
            <person name="Sugiyama A."/>
            <person name="Takemoto M."/>
            <person name="Kawakami B."/>
            <person name="Yamazaki M."/>
            <person name="Watanabe K."/>
            <person name="Kumagai A."/>
            <person name="Itakura S."/>
            <person name="Fukuzumi Y."/>
            <person name="Fujimori Y."/>
            <person name="Komiyama M."/>
            <person name="Tashiro H."/>
            <person name="Tanigami A."/>
            <person name="Fujiwara T."/>
            <person name="Ono T."/>
            <person name="Yamada K."/>
            <person name="Fujii Y."/>
            <person name="Ozaki K."/>
            <person name="Hirao M."/>
            <person name="Ohmori Y."/>
            <person name="Kawabata A."/>
            <person name="Hikiji T."/>
            <person name="Kobatake N."/>
            <person name="Inagaki H."/>
            <person name="Ikema Y."/>
            <person name="Okamoto S."/>
            <person name="Okitani R."/>
            <person name="Kawakami T."/>
            <person name="Noguchi S."/>
            <person name="Itoh T."/>
            <person name="Shigeta K."/>
            <person name="Senba T."/>
            <person name="Matsumura K."/>
            <person name="Nakajima Y."/>
            <person name="Mizuno T."/>
            <person name="Morinaga M."/>
            <person name="Sasaki M."/>
            <person name="Togashi T."/>
            <person name="Oyama M."/>
            <person name="Hata H."/>
            <person name="Watanabe M."/>
            <person name="Komatsu T."/>
            <person name="Mizushima-Sugano J."/>
            <person name="Satoh T."/>
            <person name="Shirai Y."/>
            <person name="Takahashi Y."/>
            <person name="Nakagawa K."/>
            <person name="Okumura K."/>
            <person name="Nagase T."/>
            <person name="Nomura N."/>
            <person name="Kikuchi H."/>
            <person name="Masuho Y."/>
            <person name="Yamashita R."/>
            <person name="Nakai K."/>
            <person name="Yada T."/>
            <person name="Nakamura Y."/>
            <person name="Ohara O."/>
            <person name="Isogai T."/>
            <person name="Sugano S."/>
        </authorList>
    </citation>
    <scope>NUCLEOTIDE SEQUENCE [LARGE SCALE MRNA]</scope>
    <source>
        <tissue>Placenta</tissue>
    </source>
</reference>
<reference key="3">
    <citation type="submission" date="2005-09" db="EMBL/GenBank/DDBJ databases">
        <authorList>
            <person name="Mural R.J."/>
            <person name="Istrail S."/>
            <person name="Sutton G.G."/>
            <person name="Florea L."/>
            <person name="Halpern A.L."/>
            <person name="Mobarry C.M."/>
            <person name="Lippert R."/>
            <person name="Walenz B."/>
            <person name="Shatkay H."/>
            <person name="Dew I."/>
            <person name="Miller J.R."/>
            <person name="Flanigan M.J."/>
            <person name="Edwards N.J."/>
            <person name="Bolanos R."/>
            <person name="Fasulo D."/>
            <person name="Halldorsson B.V."/>
            <person name="Hannenhalli S."/>
            <person name="Turner R."/>
            <person name="Yooseph S."/>
            <person name="Lu F."/>
            <person name="Nusskern D.R."/>
            <person name="Shue B.C."/>
            <person name="Zheng X.H."/>
            <person name="Zhong F."/>
            <person name="Delcher A.L."/>
            <person name="Huson D.H."/>
            <person name="Kravitz S.A."/>
            <person name="Mouchard L."/>
            <person name="Reinert K."/>
            <person name="Remington K.A."/>
            <person name="Clark A.G."/>
            <person name="Waterman M.S."/>
            <person name="Eichler E.E."/>
            <person name="Adams M.D."/>
            <person name="Hunkapiller M.W."/>
            <person name="Myers E.W."/>
            <person name="Venter J.C."/>
        </authorList>
    </citation>
    <scope>NUCLEOTIDE SEQUENCE [LARGE SCALE GENOMIC DNA]</scope>
</reference>
<reference key="4">
    <citation type="journal article" date="2004" name="Genome Res.">
        <title>The status, quality, and expansion of the NIH full-length cDNA project: the Mammalian Gene Collection (MGC).</title>
        <authorList>
            <consortium name="The MGC Project Team"/>
        </authorList>
    </citation>
    <scope>NUCLEOTIDE SEQUENCE [LARGE SCALE MRNA]</scope>
    <source>
        <tissue>Placenta</tissue>
    </source>
</reference>
<reference key="5">
    <citation type="journal article" date="1999" name="Cell">
        <title>A novel role for 3-O-sulfated heparan sulfate in herpes simplex virus 1 entry.</title>
        <authorList>
            <person name="Shukla D."/>
            <person name="Liu J."/>
            <person name="Blaiklock P."/>
            <person name="Shworak N.W."/>
            <person name="Bai X."/>
            <person name="Esko J.D."/>
            <person name="Cohen G.H."/>
            <person name="Eisenberg R.J."/>
            <person name="Rosenberg R.D."/>
            <person name="Spear P.G."/>
        </authorList>
    </citation>
    <scope>FUNCTION IN HSV-1 ENTRY</scope>
</reference>
<reference key="6">
    <citation type="journal article" date="1999" name="J. Biol. Chem.">
        <title>Expression of heparan sulfate D-glucosaminyl 3-O-sulfotransferase isoforms reveals novel substrate specificities.</title>
        <authorList>
            <person name="Liu J."/>
            <person name="Shworak N.W."/>
            <person name="Sinay P."/>
            <person name="Schwartz J.J."/>
            <person name="Zhang L."/>
            <person name="Fritze L.M.S."/>
            <person name="Rosenberg R.D."/>
        </authorList>
    </citation>
    <scope>FUNCTION</scope>
    <scope>CATALYTIC ACTIVITY</scope>
</reference>
<organism>
    <name type="scientific">Homo sapiens</name>
    <name type="common">Human</name>
    <dbReference type="NCBI Taxonomy" id="9606"/>
    <lineage>
        <taxon>Eukaryota</taxon>
        <taxon>Metazoa</taxon>
        <taxon>Chordata</taxon>
        <taxon>Craniata</taxon>
        <taxon>Vertebrata</taxon>
        <taxon>Euteleostomi</taxon>
        <taxon>Mammalia</taxon>
        <taxon>Eutheria</taxon>
        <taxon>Euarchontoglires</taxon>
        <taxon>Primates</taxon>
        <taxon>Haplorrhini</taxon>
        <taxon>Catarrhini</taxon>
        <taxon>Hominidae</taxon>
        <taxon>Homo</taxon>
    </lineage>
</organism>
<protein>
    <recommendedName>
        <fullName>Heparan sulfate glucosamine 3-O-sulfotransferase 3B1</fullName>
        <ecNumber evidence="6">2.8.2.30</ecNumber>
    </recommendedName>
    <alternativeName>
        <fullName evidence="7">Heparan sulfate D-glucosaminyl 3-O-sulfotransferase 3B1</fullName>
        <shortName evidence="7">3-OST-3B</shortName>
        <shortName>Heparan sulfate 3-O-sulfotransferase 3B1</shortName>
        <shortName>h3-OST-3B</shortName>
    </alternativeName>
</protein>
<comment type="function">
    <text evidence="4 6">Sulfotransferase that utilizes 3'-phospho-5'-adenylyl sulfate (PAPS) to catalyze the transfer of a sulfo group to an N-unsubstituted glucosamine linked to a 2-O-sulfo iduronic acid unit on heparan sulfate (PubMed:10520990, PubMed:9988768). Catalyzes the O-sulfation of glucosamine in IdoUA2S-GlcNS and also in IdoUA2S-GlcNH2 (PubMed:10520990, PubMed:9988768). The substrate-specific O-sulfation generates an enzyme-modified heparan sulfate which acts as a binding receptor to Herpes simplex virus-1 (HSV-1) and permits its entry (PubMed:10520990). Unlike HS3ST1/3-OST-1, does not convert non-anticoagulant heparan sulfate to anticoagulant heparan sulfate (PubMed:9988768).</text>
</comment>
<comment type="catalytic activity">
    <reaction evidence="6">
        <text>alpha-D-glucosaminyl-[heparan sulfate](n) + 3'-phosphoadenylyl sulfate = 3-sulfo-alpha-D-glucosaminyl-[heparan sulfate](n) + adenosine 3',5'-bisphosphate + H(+)</text>
        <dbReference type="Rhea" id="RHEA:15461"/>
        <dbReference type="Rhea" id="RHEA-COMP:9830"/>
        <dbReference type="Rhea" id="RHEA-COMP:9831"/>
        <dbReference type="ChEBI" id="CHEBI:15378"/>
        <dbReference type="ChEBI" id="CHEBI:58339"/>
        <dbReference type="ChEBI" id="CHEBI:58343"/>
        <dbReference type="ChEBI" id="CHEBI:58388"/>
        <dbReference type="ChEBI" id="CHEBI:70975"/>
        <dbReference type="EC" id="2.8.2.30"/>
    </reaction>
</comment>
<comment type="subcellular location">
    <subcellularLocation>
        <location evidence="8">Golgi apparatus membrane</location>
        <topology evidence="8">Single-pass type II membrane protein</topology>
    </subcellularLocation>
</comment>
<comment type="tissue specificity">
    <text evidence="5">Ubiquitous. Most abundant in liver and placenta, followed by heart and kidney.</text>
</comment>
<comment type="similarity">
    <text evidence="8">Belongs to the sulfotransferase 1 family.</text>
</comment>
<dbReference type="EC" id="2.8.2.30" evidence="6"/>
<dbReference type="EMBL" id="AF105377">
    <property type="protein sequence ID" value="AAD30209.1"/>
    <property type="molecule type" value="mRNA"/>
</dbReference>
<dbReference type="EMBL" id="AK023723">
    <property type="protein sequence ID" value="BAG51220.1"/>
    <property type="molecule type" value="mRNA"/>
</dbReference>
<dbReference type="EMBL" id="CH471108">
    <property type="protein sequence ID" value="EAW89953.1"/>
    <property type="molecule type" value="Genomic_DNA"/>
</dbReference>
<dbReference type="EMBL" id="CH471108">
    <property type="protein sequence ID" value="EAW89954.1"/>
    <property type="molecule type" value="Genomic_DNA"/>
</dbReference>
<dbReference type="EMBL" id="BC063301">
    <property type="protein sequence ID" value="AAH63301.1"/>
    <property type="molecule type" value="mRNA"/>
</dbReference>
<dbReference type="EMBL" id="BC069664">
    <property type="protein sequence ID" value="AAH69664.1"/>
    <property type="molecule type" value="mRNA"/>
</dbReference>
<dbReference type="EMBL" id="BC069725">
    <property type="protein sequence ID" value="AAH69725.1"/>
    <property type="molecule type" value="mRNA"/>
</dbReference>
<dbReference type="CCDS" id="CCDS11167.1"/>
<dbReference type="RefSeq" id="NP_006032.1">
    <property type="nucleotide sequence ID" value="NM_006041.3"/>
</dbReference>
<dbReference type="SMR" id="Q9Y662"/>
<dbReference type="BioGRID" id="115278">
    <property type="interactions" value="16"/>
</dbReference>
<dbReference type="FunCoup" id="Q9Y662">
    <property type="interactions" value="275"/>
</dbReference>
<dbReference type="IntAct" id="Q9Y662">
    <property type="interactions" value="7"/>
</dbReference>
<dbReference type="STRING" id="9606.ENSP00000354213"/>
<dbReference type="GlyCosmos" id="Q9Y662">
    <property type="glycosylation" value="2 sites, No reported glycans"/>
</dbReference>
<dbReference type="GlyGen" id="Q9Y662">
    <property type="glycosylation" value="5 sites, 1 O-linked glycan (3 sites)"/>
</dbReference>
<dbReference type="iPTMnet" id="Q9Y662"/>
<dbReference type="PhosphoSitePlus" id="Q9Y662"/>
<dbReference type="BioMuta" id="HS3ST3B1"/>
<dbReference type="DMDM" id="61214548"/>
<dbReference type="MassIVE" id="Q9Y662"/>
<dbReference type="PaxDb" id="9606-ENSP00000354213"/>
<dbReference type="PeptideAtlas" id="Q9Y662"/>
<dbReference type="ProteomicsDB" id="86605"/>
<dbReference type="Antibodypedia" id="25106">
    <property type="antibodies" value="35 antibodies from 16 providers"/>
</dbReference>
<dbReference type="DNASU" id="9953"/>
<dbReference type="Ensembl" id="ENST00000360954.3">
    <property type="protein sequence ID" value="ENSP00000354213.2"/>
    <property type="gene ID" value="ENSG00000125430.9"/>
</dbReference>
<dbReference type="Ensembl" id="ENST00000466596.5">
    <property type="protein sequence ID" value="ENSP00000436078.1"/>
    <property type="gene ID" value="ENSG00000125430.9"/>
</dbReference>
<dbReference type="GeneID" id="9953"/>
<dbReference type="KEGG" id="hsa:9953"/>
<dbReference type="MANE-Select" id="ENST00000360954.3">
    <property type="protein sequence ID" value="ENSP00000354213.2"/>
    <property type="RefSeq nucleotide sequence ID" value="NM_006041.3"/>
    <property type="RefSeq protein sequence ID" value="NP_006032.1"/>
</dbReference>
<dbReference type="UCSC" id="uc002goh.2">
    <property type="organism name" value="human"/>
</dbReference>
<dbReference type="AGR" id="HGNC:5198"/>
<dbReference type="CTD" id="9953"/>
<dbReference type="DisGeNET" id="9953"/>
<dbReference type="GeneCards" id="HS3ST3B1"/>
<dbReference type="HGNC" id="HGNC:5198">
    <property type="gene designation" value="HS3ST3B1"/>
</dbReference>
<dbReference type="HPA" id="ENSG00000125430">
    <property type="expression patterns" value="Tissue enhanced (liver, retina)"/>
</dbReference>
<dbReference type="MIM" id="604058">
    <property type="type" value="gene"/>
</dbReference>
<dbReference type="neXtProt" id="NX_Q9Y662"/>
<dbReference type="OpenTargets" id="ENSG00000125430"/>
<dbReference type="PharmGKB" id="PA29471"/>
<dbReference type="VEuPathDB" id="HostDB:ENSG00000125430"/>
<dbReference type="eggNOG" id="KOG3704">
    <property type="taxonomic scope" value="Eukaryota"/>
</dbReference>
<dbReference type="GeneTree" id="ENSGT00940000162568"/>
<dbReference type="HOGENOM" id="CLU_017703_0_1_1"/>
<dbReference type="InParanoid" id="Q9Y662"/>
<dbReference type="OMA" id="MFVMSIW"/>
<dbReference type="OrthoDB" id="411451at2759"/>
<dbReference type="PAN-GO" id="Q9Y662">
    <property type="GO annotations" value="1 GO annotation based on evolutionary models"/>
</dbReference>
<dbReference type="PhylomeDB" id="Q9Y662"/>
<dbReference type="TreeFam" id="TF350755"/>
<dbReference type="BioCyc" id="MetaCyc:HS04884-MONOMER"/>
<dbReference type="BRENDA" id="2.8.2.30">
    <property type="organism ID" value="2681"/>
</dbReference>
<dbReference type="PathwayCommons" id="Q9Y662"/>
<dbReference type="Reactome" id="R-HSA-2022928">
    <property type="pathway name" value="HS-GAG biosynthesis"/>
</dbReference>
<dbReference type="SignaLink" id="Q9Y662"/>
<dbReference type="BioGRID-ORCS" id="9953">
    <property type="hits" value="11 hits in 1152 CRISPR screens"/>
</dbReference>
<dbReference type="ChiTaRS" id="HS3ST3B1">
    <property type="organism name" value="human"/>
</dbReference>
<dbReference type="GeneWiki" id="HS3ST3B1"/>
<dbReference type="GenomeRNAi" id="9953"/>
<dbReference type="Pharos" id="Q9Y662">
    <property type="development level" value="Tbio"/>
</dbReference>
<dbReference type="PRO" id="PR:Q9Y662"/>
<dbReference type="Proteomes" id="UP000005640">
    <property type="component" value="Chromosome 17"/>
</dbReference>
<dbReference type="RNAct" id="Q9Y662">
    <property type="molecule type" value="protein"/>
</dbReference>
<dbReference type="Bgee" id="ENSG00000125430">
    <property type="expression patterns" value="Expressed in tibia and 132 other cell types or tissues"/>
</dbReference>
<dbReference type="GO" id="GO:0000139">
    <property type="term" value="C:Golgi membrane"/>
    <property type="evidence" value="ECO:0000304"/>
    <property type="project" value="Reactome"/>
</dbReference>
<dbReference type="GO" id="GO:0005886">
    <property type="term" value="C:plasma membrane"/>
    <property type="evidence" value="ECO:0000304"/>
    <property type="project" value="ProtInc"/>
</dbReference>
<dbReference type="GO" id="GO:0008467">
    <property type="term" value="F:[heparan sulfate]-glucosamine 3-sulfotransferase activity"/>
    <property type="evidence" value="ECO:0000314"/>
    <property type="project" value="UniProtKB"/>
</dbReference>
<dbReference type="GO" id="GO:0001658">
    <property type="term" value="P:branching involved in ureteric bud morphogenesis"/>
    <property type="evidence" value="ECO:0007669"/>
    <property type="project" value="Ensembl"/>
</dbReference>
<dbReference type="GO" id="GO:0006024">
    <property type="term" value="P:glycosaminoglycan biosynthetic process"/>
    <property type="evidence" value="ECO:0000314"/>
    <property type="project" value="UniProtKB"/>
</dbReference>
<dbReference type="GO" id="GO:0015012">
    <property type="term" value="P:heparan sulfate proteoglycan biosynthetic process"/>
    <property type="evidence" value="ECO:0000304"/>
    <property type="project" value="ProtInc"/>
</dbReference>
<dbReference type="FunFam" id="3.40.50.300:FF:000194">
    <property type="entry name" value="Sulfotransferase"/>
    <property type="match status" value="1"/>
</dbReference>
<dbReference type="Gene3D" id="3.40.50.300">
    <property type="entry name" value="P-loop containing nucleotide triphosphate hydrolases"/>
    <property type="match status" value="1"/>
</dbReference>
<dbReference type="InterPro" id="IPR037359">
    <property type="entry name" value="NST/OST"/>
</dbReference>
<dbReference type="InterPro" id="IPR027417">
    <property type="entry name" value="P-loop_NTPase"/>
</dbReference>
<dbReference type="InterPro" id="IPR000863">
    <property type="entry name" value="Sulfotransferase_dom"/>
</dbReference>
<dbReference type="PANTHER" id="PTHR10605:SF7">
    <property type="entry name" value="HEPARAN SULFATE GLUCOSAMINE 3-O-SULFOTRANSFERASE 3B1"/>
    <property type="match status" value="1"/>
</dbReference>
<dbReference type="PANTHER" id="PTHR10605">
    <property type="entry name" value="HEPARAN SULFATE SULFOTRANSFERASE"/>
    <property type="match status" value="1"/>
</dbReference>
<dbReference type="Pfam" id="PF00685">
    <property type="entry name" value="Sulfotransfer_1"/>
    <property type="match status" value="1"/>
</dbReference>
<dbReference type="SUPFAM" id="SSF52540">
    <property type="entry name" value="P-loop containing nucleoside triphosphate hydrolases"/>
    <property type="match status" value="1"/>
</dbReference>